<comment type="function">
    <text evidence="1">May play a role in Golgi structure maintenance.</text>
</comment>
<comment type="subcellular location">
    <subcellularLocation>
        <location evidence="1">Golgi apparatus membrane</location>
        <topology evidence="1">Multi-pass membrane protein</topology>
    </subcellularLocation>
</comment>
<keyword id="KW-0333">Golgi apparatus</keyword>
<keyword id="KW-0472">Membrane</keyword>
<keyword id="KW-1185">Reference proteome</keyword>
<keyword id="KW-0677">Repeat</keyword>
<keyword id="KW-0812">Transmembrane</keyword>
<keyword id="KW-1133">Transmembrane helix</keyword>
<accession>Q6GLN5</accession>
<name>NFIP1_XENLA</name>
<dbReference type="EMBL" id="BC074425">
    <property type="protein sequence ID" value="AAH74425.1"/>
    <property type="molecule type" value="mRNA"/>
</dbReference>
<dbReference type="RefSeq" id="NP_001086285.1">
    <property type="nucleotide sequence ID" value="NM_001092816.1"/>
</dbReference>
<dbReference type="DNASU" id="444714"/>
<dbReference type="GeneID" id="444714"/>
<dbReference type="KEGG" id="xla:444714"/>
<dbReference type="AGR" id="Xenbase:XB-GENE-961963"/>
<dbReference type="CTD" id="444714"/>
<dbReference type="Xenbase" id="XB-GENE-961963">
    <property type="gene designation" value="ndfip1.L"/>
</dbReference>
<dbReference type="OrthoDB" id="10003116at2759"/>
<dbReference type="Proteomes" id="UP000186698">
    <property type="component" value="Chromosome 3L"/>
</dbReference>
<dbReference type="Bgee" id="444714">
    <property type="expression patterns" value="Expressed in brain and 19 other cell types or tissues"/>
</dbReference>
<dbReference type="GO" id="GO:0005783">
    <property type="term" value="C:endoplasmic reticulum"/>
    <property type="evidence" value="ECO:0000318"/>
    <property type="project" value="GO_Central"/>
</dbReference>
<dbReference type="GO" id="GO:0005794">
    <property type="term" value="C:Golgi apparatus"/>
    <property type="evidence" value="ECO:0000318"/>
    <property type="project" value="GO_Central"/>
</dbReference>
<dbReference type="GO" id="GO:0000139">
    <property type="term" value="C:Golgi membrane"/>
    <property type="evidence" value="ECO:0007669"/>
    <property type="project" value="UniProtKB-SubCell"/>
</dbReference>
<dbReference type="GO" id="GO:0048471">
    <property type="term" value="C:perinuclear region of cytoplasm"/>
    <property type="evidence" value="ECO:0000318"/>
    <property type="project" value="GO_Central"/>
</dbReference>
<dbReference type="GO" id="GO:0050699">
    <property type="term" value="F:WW domain binding"/>
    <property type="evidence" value="ECO:0007669"/>
    <property type="project" value="TreeGrafter"/>
</dbReference>
<dbReference type="GO" id="GO:0030001">
    <property type="term" value="P:metal ion transport"/>
    <property type="evidence" value="ECO:0007669"/>
    <property type="project" value="InterPro"/>
</dbReference>
<dbReference type="GO" id="GO:0031398">
    <property type="term" value="P:positive regulation of protein ubiquitination"/>
    <property type="evidence" value="ECO:0000318"/>
    <property type="project" value="GO_Central"/>
</dbReference>
<dbReference type="GO" id="GO:0006511">
    <property type="term" value="P:ubiquitin-dependent protein catabolic process"/>
    <property type="evidence" value="ECO:0000318"/>
    <property type="project" value="GO_Central"/>
</dbReference>
<dbReference type="GO" id="GO:0007034">
    <property type="term" value="P:vacuolar transport"/>
    <property type="evidence" value="ECO:0007669"/>
    <property type="project" value="InterPro"/>
</dbReference>
<dbReference type="CDD" id="cd22305">
    <property type="entry name" value="NDFIP1"/>
    <property type="match status" value="1"/>
</dbReference>
<dbReference type="InterPro" id="IPR019325">
    <property type="entry name" value="NEDD4/Bsd2"/>
</dbReference>
<dbReference type="PANTHER" id="PTHR13396">
    <property type="entry name" value="NEDD4 FAMILY INTERACTING PROTEIN 1/2"/>
    <property type="match status" value="1"/>
</dbReference>
<dbReference type="PANTHER" id="PTHR13396:SF3">
    <property type="entry name" value="NEDD4 FAMILY-INTERACTING PROTEIN 1"/>
    <property type="match status" value="1"/>
</dbReference>
<dbReference type="Pfam" id="PF10176">
    <property type="entry name" value="NEDD4_Bsd2"/>
    <property type="match status" value="2"/>
</dbReference>
<proteinExistence type="evidence at transcript level"/>
<organism>
    <name type="scientific">Xenopus laevis</name>
    <name type="common">African clawed frog</name>
    <dbReference type="NCBI Taxonomy" id="8355"/>
    <lineage>
        <taxon>Eukaryota</taxon>
        <taxon>Metazoa</taxon>
        <taxon>Chordata</taxon>
        <taxon>Craniata</taxon>
        <taxon>Vertebrata</taxon>
        <taxon>Euteleostomi</taxon>
        <taxon>Amphibia</taxon>
        <taxon>Batrachia</taxon>
        <taxon>Anura</taxon>
        <taxon>Pipoidea</taxon>
        <taxon>Pipidae</taxon>
        <taxon>Xenopodinae</taxon>
        <taxon>Xenopus</taxon>
        <taxon>Xenopus</taxon>
    </lineage>
</organism>
<gene>
    <name type="primary">ndfip1</name>
</gene>
<feature type="chain" id="PRO_0000076273" description="NEDD4 family-interacting protein 1">
    <location>
        <begin position="1"/>
        <end position="212"/>
    </location>
</feature>
<feature type="topological domain" description="Cytoplasmic" evidence="2">
    <location>
        <begin position="1"/>
        <end position="107"/>
    </location>
</feature>
<feature type="transmembrane region" description="Helical" evidence="2">
    <location>
        <begin position="108"/>
        <end position="128"/>
    </location>
</feature>
<feature type="topological domain" description="Extracellular" evidence="2">
    <location>
        <begin position="129"/>
        <end position="134"/>
    </location>
</feature>
<feature type="transmembrane region" description="Helical" evidence="2">
    <location>
        <begin position="135"/>
        <end position="155"/>
    </location>
</feature>
<feature type="topological domain" description="Cytoplasmic" evidence="2">
    <location>
        <begin position="156"/>
        <end position="163"/>
    </location>
</feature>
<feature type="transmembrane region" description="Helical" evidence="2">
    <location>
        <begin position="164"/>
        <end position="184"/>
    </location>
</feature>
<feature type="topological domain" description="Extracellular" evidence="2">
    <location>
        <begin position="185"/>
        <end position="212"/>
    </location>
</feature>
<feature type="region of interest" description="Disordered" evidence="3">
    <location>
        <begin position="1"/>
        <end position="40"/>
    </location>
</feature>
<feature type="short sequence motif" description="PPxY motif 1">
    <location>
        <begin position="30"/>
        <end position="33"/>
    </location>
</feature>
<feature type="short sequence motif" description="PPxY motif 2">
    <location>
        <begin position="55"/>
        <end position="58"/>
    </location>
</feature>
<feature type="compositionally biased region" description="Polar residues" evidence="3">
    <location>
        <begin position="1"/>
        <end position="14"/>
    </location>
</feature>
<reference key="1">
    <citation type="submission" date="2004-06" db="EMBL/GenBank/DDBJ databases">
        <authorList>
            <consortium name="NIH - Xenopus Gene Collection (XGC) project"/>
        </authorList>
    </citation>
    <scope>NUCLEOTIDE SEQUENCE [LARGE SCALE MRNA]</scope>
    <source>
        <tissue>Eye</tissue>
    </source>
</reference>
<evidence type="ECO:0000250" key="1"/>
<evidence type="ECO:0000255" key="2"/>
<evidence type="ECO:0000256" key="3">
    <source>
        <dbReference type="SAM" id="MobiDB-lite"/>
    </source>
</evidence>
<protein>
    <recommendedName>
        <fullName>NEDD4 family-interacting protein 1</fullName>
    </recommendedName>
</protein>
<sequence>MSEQSSSSRYQQLQNEEEPGENAQASADAPPPYSSIAGESSGLFDYKDELGFPKPPSYNVATTLPSYDEAERSKAEATIPLVPGRDDDFVARDDFDDADQLRIGNDGIFMLTFFMAFLFNWIGFFLSFCLTSSAAGRYGAISGFGLSLIKWILIVRFSTYFPGYFDGQYWLWWVFLVLGFLLFLRGFINYAKVRKMPDNFSTLPRTRVLFIY</sequence>